<keyword id="KW-0418">Kinase</keyword>
<keyword id="KW-0547">Nucleotide-binding</keyword>
<keyword id="KW-1185">Reference proteome</keyword>
<keyword id="KW-0723">Serine/threonine-protein kinase</keyword>
<keyword id="KW-0808">Transferase</keyword>
<protein>
    <recommendedName>
        <fullName evidence="1">Putative phosphoenolpyruvate synthase regulatory protein</fullName>
        <shortName evidence="1">PEP synthase regulatory protein</shortName>
        <shortName evidence="1">PSRP</shortName>
        <ecNumber evidence="1">2.7.11.33</ecNumber>
        <ecNumber evidence="1">2.7.4.28</ecNumber>
    </recommendedName>
    <alternativeName>
        <fullName evidence="1">Pyruvate, water dikinase regulatory protein</fullName>
    </alternativeName>
</protein>
<sequence length="272" mass="30824">MKRTAFFISDGTGITAETLGQSLLAQFESIPFNKFTRPYIDSPDKARVMVQQINAAAERDGVRPIIFDTIVNQDIREILATSNGFMIDIFSSFLSPLEQELIAHSSYSVGKSHSIGGNSNYMERIEAVNFALDNDDGARTHYYDKADLILVGVSRCGKTPTCLYMAMQFGIRAANYPLTEDDMERLQLPAVLKKHHSKLFGLTIDPDRLTAIRHERKPNSRYSSFAQCEFEVREVESLFRRENIPNINSTHFSVEEISAKILVEKGVERRFK</sequence>
<proteinExistence type="inferred from homology"/>
<feature type="chain" id="PRO_0000196691" description="Putative phosphoenolpyruvate synthase regulatory protein">
    <location>
        <begin position="1"/>
        <end position="272"/>
    </location>
</feature>
<feature type="binding site" evidence="1">
    <location>
        <begin position="152"/>
        <end position="159"/>
    </location>
    <ligand>
        <name>ADP</name>
        <dbReference type="ChEBI" id="CHEBI:456216"/>
    </ligand>
</feature>
<comment type="function">
    <text evidence="1">Bifunctional serine/threonine kinase and phosphorylase involved in the regulation of the phosphoenolpyruvate synthase (PEPS) by catalyzing its phosphorylation/dephosphorylation.</text>
</comment>
<comment type="catalytic activity">
    <reaction evidence="1">
        <text>[pyruvate, water dikinase] + ADP = [pyruvate, water dikinase]-phosphate + AMP + H(+)</text>
        <dbReference type="Rhea" id="RHEA:46020"/>
        <dbReference type="Rhea" id="RHEA-COMP:11425"/>
        <dbReference type="Rhea" id="RHEA-COMP:11426"/>
        <dbReference type="ChEBI" id="CHEBI:15378"/>
        <dbReference type="ChEBI" id="CHEBI:43176"/>
        <dbReference type="ChEBI" id="CHEBI:68546"/>
        <dbReference type="ChEBI" id="CHEBI:456215"/>
        <dbReference type="ChEBI" id="CHEBI:456216"/>
        <dbReference type="EC" id="2.7.11.33"/>
    </reaction>
</comment>
<comment type="catalytic activity">
    <reaction evidence="1">
        <text>[pyruvate, water dikinase]-phosphate + phosphate + H(+) = [pyruvate, water dikinase] + diphosphate</text>
        <dbReference type="Rhea" id="RHEA:48580"/>
        <dbReference type="Rhea" id="RHEA-COMP:11425"/>
        <dbReference type="Rhea" id="RHEA-COMP:11426"/>
        <dbReference type="ChEBI" id="CHEBI:15378"/>
        <dbReference type="ChEBI" id="CHEBI:33019"/>
        <dbReference type="ChEBI" id="CHEBI:43176"/>
        <dbReference type="ChEBI" id="CHEBI:43474"/>
        <dbReference type="ChEBI" id="CHEBI:68546"/>
        <dbReference type="EC" id="2.7.4.28"/>
    </reaction>
</comment>
<comment type="similarity">
    <text evidence="1">Belongs to the pyruvate, phosphate/water dikinase regulatory protein family. PSRP subfamily.</text>
</comment>
<dbReference type="EC" id="2.7.11.33" evidence="1"/>
<dbReference type="EC" id="2.7.4.28" evidence="1"/>
<dbReference type="EMBL" id="AE015451">
    <property type="protein sequence ID" value="AAN67695.1"/>
    <property type="molecule type" value="Genomic_DNA"/>
</dbReference>
<dbReference type="RefSeq" id="NP_744231.1">
    <property type="nucleotide sequence ID" value="NC_002947.4"/>
</dbReference>
<dbReference type="RefSeq" id="WP_010953083.1">
    <property type="nucleotide sequence ID" value="NZ_CP169744.1"/>
</dbReference>
<dbReference type="SMR" id="Q88L54"/>
<dbReference type="STRING" id="160488.PP_2081"/>
<dbReference type="PaxDb" id="160488-PP_2081"/>
<dbReference type="KEGG" id="ppu:PP_2081"/>
<dbReference type="PATRIC" id="fig|160488.4.peg.2193"/>
<dbReference type="eggNOG" id="COG1806">
    <property type="taxonomic scope" value="Bacteria"/>
</dbReference>
<dbReference type="HOGENOM" id="CLU_046206_1_0_6"/>
<dbReference type="OrthoDB" id="9782201at2"/>
<dbReference type="PhylomeDB" id="Q88L54"/>
<dbReference type="BioCyc" id="PPUT160488:G1G01-2219-MONOMER"/>
<dbReference type="Proteomes" id="UP000000556">
    <property type="component" value="Chromosome"/>
</dbReference>
<dbReference type="GO" id="GO:0043531">
    <property type="term" value="F:ADP binding"/>
    <property type="evidence" value="ECO:0007669"/>
    <property type="project" value="UniProtKB-UniRule"/>
</dbReference>
<dbReference type="GO" id="GO:0005524">
    <property type="term" value="F:ATP binding"/>
    <property type="evidence" value="ECO:0007669"/>
    <property type="project" value="InterPro"/>
</dbReference>
<dbReference type="GO" id="GO:0016776">
    <property type="term" value="F:phosphotransferase activity, phosphate group as acceptor"/>
    <property type="evidence" value="ECO:0007669"/>
    <property type="project" value="UniProtKB-UniRule"/>
</dbReference>
<dbReference type="GO" id="GO:0004674">
    <property type="term" value="F:protein serine/threonine kinase activity"/>
    <property type="evidence" value="ECO:0007669"/>
    <property type="project" value="UniProtKB-UniRule"/>
</dbReference>
<dbReference type="HAMAP" id="MF_01062">
    <property type="entry name" value="PSRP"/>
    <property type="match status" value="1"/>
</dbReference>
<dbReference type="InterPro" id="IPR005177">
    <property type="entry name" value="Kinase-pyrophosphorylase"/>
</dbReference>
<dbReference type="InterPro" id="IPR026530">
    <property type="entry name" value="PSRP"/>
</dbReference>
<dbReference type="NCBIfam" id="NF003742">
    <property type="entry name" value="PRK05339.1"/>
    <property type="match status" value="1"/>
</dbReference>
<dbReference type="PANTHER" id="PTHR31756">
    <property type="entry name" value="PYRUVATE, PHOSPHATE DIKINASE REGULATORY PROTEIN 1, CHLOROPLASTIC"/>
    <property type="match status" value="1"/>
</dbReference>
<dbReference type="PANTHER" id="PTHR31756:SF3">
    <property type="entry name" value="PYRUVATE, PHOSPHATE DIKINASE REGULATORY PROTEIN 1, CHLOROPLASTIC"/>
    <property type="match status" value="1"/>
</dbReference>
<dbReference type="Pfam" id="PF03618">
    <property type="entry name" value="Kinase-PPPase"/>
    <property type="match status" value="1"/>
</dbReference>
<evidence type="ECO:0000255" key="1">
    <source>
        <dbReference type="HAMAP-Rule" id="MF_01062"/>
    </source>
</evidence>
<accession>Q88L54</accession>
<name>PSRP_PSEPK</name>
<reference key="1">
    <citation type="journal article" date="2002" name="Environ. Microbiol.">
        <title>Complete genome sequence and comparative analysis of the metabolically versatile Pseudomonas putida KT2440.</title>
        <authorList>
            <person name="Nelson K.E."/>
            <person name="Weinel C."/>
            <person name="Paulsen I.T."/>
            <person name="Dodson R.J."/>
            <person name="Hilbert H."/>
            <person name="Martins dos Santos V.A.P."/>
            <person name="Fouts D.E."/>
            <person name="Gill S.R."/>
            <person name="Pop M."/>
            <person name="Holmes M."/>
            <person name="Brinkac L.M."/>
            <person name="Beanan M.J."/>
            <person name="DeBoy R.T."/>
            <person name="Daugherty S.C."/>
            <person name="Kolonay J.F."/>
            <person name="Madupu R."/>
            <person name="Nelson W.C."/>
            <person name="White O."/>
            <person name="Peterson J.D."/>
            <person name="Khouri H.M."/>
            <person name="Hance I."/>
            <person name="Chris Lee P."/>
            <person name="Holtzapple E.K."/>
            <person name="Scanlan D."/>
            <person name="Tran K."/>
            <person name="Moazzez A."/>
            <person name="Utterback T.R."/>
            <person name="Rizzo M."/>
            <person name="Lee K."/>
            <person name="Kosack D."/>
            <person name="Moestl D."/>
            <person name="Wedler H."/>
            <person name="Lauber J."/>
            <person name="Stjepandic D."/>
            <person name="Hoheisel J."/>
            <person name="Straetz M."/>
            <person name="Heim S."/>
            <person name="Kiewitz C."/>
            <person name="Eisen J.A."/>
            <person name="Timmis K.N."/>
            <person name="Duesterhoeft A."/>
            <person name="Tuemmler B."/>
            <person name="Fraser C.M."/>
        </authorList>
    </citation>
    <scope>NUCLEOTIDE SEQUENCE [LARGE SCALE GENOMIC DNA]</scope>
    <source>
        <strain>ATCC 47054 / DSM 6125 / CFBP 8728 / NCIMB 11950 / KT2440</strain>
    </source>
</reference>
<gene>
    <name type="ordered locus">PP_2081</name>
</gene>
<organism>
    <name type="scientific">Pseudomonas putida (strain ATCC 47054 / DSM 6125 / CFBP 8728 / NCIMB 11950 / KT2440)</name>
    <dbReference type="NCBI Taxonomy" id="160488"/>
    <lineage>
        <taxon>Bacteria</taxon>
        <taxon>Pseudomonadati</taxon>
        <taxon>Pseudomonadota</taxon>
        <taxon>Gammaproteobacteria</taxon>
        <taxon>Pseudomonadales</taxon>
        <taxon>Pseudomonadaceae</taxon>
        <taxon>Pseudomonas</taxon>
    </lineage>
</organism>